<dbReference type="EC" id="2.4.2.29" evidence="1"/>
<dbReference type="EMBL" id="BA000037">
    <property type="protein sequence ID" value="BAC93510.1"/>
    <property type="status" value="ALT_INIT"/>
    <property type="molecule type" value="Genomic_DNA"/>
</dbReference>
<dbReference type="RefSeq" id="WP_013572355.1">
    <property type="nucleotide sequence ID" value="NC_005139.1"/>
</dbReference>
<dbReference type="SMR" id="Q7MNH1"/>
<dbReference type="STRING" id="672.VV93_v1c06920"/>
<dbReference type="GeneID" id="93894750"/>
<dbReference type="KEGG" id="vvy:VV0746"/>
<dbReference type="eggNOG" id="COG0343">
    <property type="taxonomic scope" value="Bacteria"/>
</dbReference>
<dbReference type="HOGENOM" id="CLU_022060_0_1_6"/>
<dbReference type="UniPathway" id="UPA00392"/>
<dbReference type="Proteomes" id="UP000002675">
    <property type="component" value="Chromosome I"/>
</dbReference>
<dbReference type="GO" id="GO:0005829">
    <property type="term" value="C:cytosol"/>
    <property type="evidence" value="ECO:0007669"/>
    <property type="project" value="TreeGrafter"/>
</dbReference>
<dbReference type="GO" id="GO:0046872">
    <property type="term" value="F:metal ion binding"/>
    <property type="evidence" value="ECO:0007669"/>
    <property type="project" value="UniProtKB-KW"/>
</dbReference>
<dbReference type="GO" id="GO:0008479">
    <property type="term" value="F:tRNA-guanosine(34) queuine transglycosylase activity"/>
    <property type="evidence" value="ECO:0007669"/>
    <property type="project" value="UniProtKB-UniRule"/>
</dbReference>
<dbReference type="GO" id="GO:0008616">
    <property type="term" value="P:queuosine biosynthetic process"/>
    <property type="evidence" value="ECO:0007669"/>
    <property type="project" value="UniProtKB-UniRule"/>
</dbReference>
<dbReference type="GO" id="GO:0002099">
    <property type="term" value="P:tRNA wobble guanine modification"/>
    <property type="evidence" value="ECO:0007669"/>
    <property type="project" value="TreeGrafter"/>
</dbReference>
<dbReference type="GO" id="GO:0101030">
    <property type="term" value="P:tRNA-guanine transglycosylation"/>
    <property type="evidence" value="ECO:0007669"/>
    <property type="project" value="InterPro"/>
</dbReference>
<dbReference type="FunFam" id="3.20.20.105:FF:000001">
    <property type="entry name" value="Queuine tRNA-ribosyltransferase"/>
    <property type="match status" value="1"/>
</dbReference>
<dbReference type="Gene3D" id="3.20.20.105">
    <property type="entry name" value="Queuine tRNA-ribosyltransferase-like"/>
    <property type="match status" value="1"/>
</dbReference>
<dbReference type="HAMAP" id="MF_00168">
    <property type="entry name" value="Q_tRNA_Tgt"/>
    <property type="match status" value="1"/>
</dbReference>
<dbReference type="InterPro" id="IPR050076">
    <property type="entry name" value="ArchSynthase1/Queuine_TRR"/>
</dbReference>
<dbReference type="InterPro" id="IPR004803">
    <property type="entry name" value="TGT"/>
</dbReference>
<dbReference type="InterPro" id="IPR036511">
    <property type="entry name" value="TGT-like_sf"/>
</dbReference>
<dbReference type="InterPro" id="IPR002616">
    <property type="entry name" value="tRNA_ribo_trans-like"/>
</dbReference>
<dbReference type="NCBIfam" id="TIGR00430">
    <property type="entry name" value="Q_tRNA_tgt"/>
    <property type="match status" value="1"/>
</dbReference>
<dbReference type="NCBIfam" id="TIGR00449">
    <property type="entry name" value="tgt_general"/>
    <property type="match status" value="1"/>
</dbReference>
<dbReference type="PANTHER" id="PTHR46499">
    <property type="entry name" value="QUEUINE TRNA-RIBOSYLTRANSFERASE"/>
    <property type="match status" value="1"/>
</dbReference>
<dbReference type="PANTHER" id="PTHR46499:SF1">
    <property type="entry name" value="QUEUINE TRNA-RIBOSYLTRANSFERASE"/>
    <property type="match status" value="1"/>
</dbReference>
<dbReference type="Pfam" id="PF01702">
    <property type="entry name" value="TGT"/>
    <property type="match status" value="1"/>
</dbReference>
<dbReference type="SUPFAM" id="SSF51713">
    <property type="entry name" value="tRNA-guanine transglycosylase"/>
    <property type="match status" value="1"/>
</dbReference>
<feature type="chain" id="PRO_0000135554" description="Queuine tRNA-ribosyltransferase">
    <location>
        <begin position="1"/>
        <end position="378"/>
    </location>
</feature>
<feature type="region of interest" description="RNA binding" evidence="1">
    <location>
        <begin position="247"/>
        <end position="253"/>
    </location>
</feature>
<feature type="region of interest" description="RNA binding; important for wobble base 34 recognition" evidence="1">
    <location>
        <begin position="271"/>
        <end position="275"/>
    </location>
</feature>
<feature type="active site" description="Proton acceptor" evidence="1">
    <location>
        <position position="91"/>
    </location>
</feature>
<feature type="active site" description="Nucleophile" evidence="1">
    <location>
        <position position="266"/>
    </location>
</feature>
<feature type="binding site" evidence="1">
    <location>
        <begin position="91"/>
        <end position="95"/>
    </location>
    <ligand>
        <name>substrate</name>
    </ligand>
</feature>
<feature type="binding site" evidence="1">
    <location>
        <position position="145"/>
    </location>
    <ligand>
        <name>substrate</name>
    </ligand>
</feature>
<feature type="binding site" evidence="1">
    <location>
        <position position="189"/>
    </location>
    <ligand>
        <name>substrate</name>
    </ligand>
</feature>
<feature type="binding site" evidence="1">
    <location>
        <position position="216"/>
    </location>
    <ligand>
        <name>substrate</name>
    </ligand>
</feature>
<feature type="binding site" evidence="1">
    <location>
        <position position="304"/>
    </location>
    <ligand>
        <name>Zn(2+)</name>
        <dbReference type="ChEBI" id="CHEBI:29105"/>
    </ligand>
</feature>
<feature type="binding site" evidence="1">
    <location>
        <position position="306"/>
    </location>
    <ligand>
        <name>Zn(2+)</name>
        <dbReference type="ChEBI" id="CHEBI:29105"/>
    </ligand>
</feature>
<feature type="binding site" evidence="1">
    <location>
        <position position="309"/>
    </location>
    <ligand>
        <name>Zn(2+)</name>
        <dbReference type="ChEBI" id="CHEBI:29105"/>
    </ligand>
</feature>
<feature type="binding site" evidence="1">
    <location>
        <position position="335"/>
    </location>
    <ligand>
        <name>Zn(2+)</name>
        <dbReference type="ChEBI" id="CHEBI:29105"/>
    </ligand>
</feature>
<sequence length="378" mass="43100">MKLKFDLKKKNGNARRGQLTFERGTVQTPAFMPVGTYGTVKGMTPEEVKETGAEILLGNTFHLWLRPGQEVMKMHGDLHDFMNWQGPILTDSGGFQVFSLGDIRKITEEGVHFRNPVNGDKIFMDAEKSMEIQKDLGSDIVMIFDECTPYPATHAEAKKSMEMSLRWAQRSRDHFDKLENPNNLFGIVQGGVYEDLRDVSVKGLTEIGFDGYAVGGLAVGEPKEDMHRVLEHTCPQLPEDKPRYLMGVGKPEDLVEGVRRGIDMFDCVMPTRNARNGHLFVTGGVIKIRNATHKTDTTPLDPHCDCYTCKNYSKSYLHHLDRCNEILGARLNTIHNLRYYQRLMESIRKAIDEDRFEQFVEEFYARRNREVPPLGKQA</sequence>
<organism>
    <name type="scientific">Vibrio vulnificus (strain YJ016)</name>
    <dbReference type="NCBI Taxonomy" id="196600"/>
    <lineage>
        <taxon>Bacteria</taxon>
        <taxon>Pseudomonadati</taxon>
        <taxon>Pseudomonadota</taxon>
        <taxon>Gammaproteobacteria</taxon>
        <taxon>Vibrionales</taxon>
        <taxon>Vibrionaceae</taxon>
        <taxon>Vibrio</taxon>
    </lineage>
</organism>
<accession>Q7MNH1</accession>
<comment type="function">
    <text evidence="1">Catalyzes the base-exchange of a guanine (G) residue with the queuine precursor 7-aminomethyl-7-deazaguanine (PreQ1) at position 34 (anticodon wobble position) in tRNAs with GU(N) anticodons (tRNA-Asp, -Asn, -His and -Tyr). Catalysis occurs through a double-displacement mechanism. The nucleophile active site attacks the C1' of nucleotide 34 to detach the guanine base from the RNA, forming a covalent enzyme-RNA intermediate. The proton acceptor active site deprotonates the incoming PreQ1, allowing a nucleophilic attack on the C1' of the ribose to form the product. After dissociation, two additional enzymatic reactions on the tRNA convert PreQ1 to queuine (Q), resulting in the hypermodified nucleoside queuosine (7-(((4,5-cis-dihydroxy-2-cyclopenten-1-yl)amino)methyl)-7-deazaguanosine).</text>
</comment>
<comment type="catalytic activity">
    <reaction evidence="1">
        <text>7-aminomethyl-7-carbaguanine + guanosine(34) in tRNA = 7-aminomethyl-7-carbaguanosine(34) in tRNA + guanine</text>
        <dbReference type="Rhea" id="RHEA:24104"/>
        <dbReference type="Rhea" id="RHEA-COMP:10341"/>
        <dbReference type="Rhea" id="RHEA-COMP:10342"/>
        <dbReference type="ChEBI" id="CHEBI:16235"/>
        <dbReference type="ChEBI" id="CHEBI:58703"/>
        <dbReference type="ChEBI" id="CHEBI:74269"/>
        <dbReference type="ChEBI" id="CHEBI:82833"/>
        <dbReference type="EC" id="2.4.2.29"/>
    </reaction>
</comment>
<comment type="cofactor">
    <cofactor evidence="1">
        <name>Zn(2+)</name>
        <dbReference type="ChEBI" id="CHEBI:29105"/>
    </cofactor>
    <text evidence="1">Binds 1 zinc ion per subunit.</text>
</comment>
<comment type="pathway">
    <text evidence="1">tRNA modification; tRNA-queuosine biosynthesis.</text>
</comment>
<comment type="subunit">
    <text evidence="1">Homodimer. Within each dimer, one monomer is responsible for RNA recognition and catalysis, while the other monomer binds to the replacement base PreQ1.</text>
</comment>
<comment type="similarity">
    <text evidence="1">Belongs to the queuine tRNA-ribosyltransferase family.</text>
</comment>
<comment type="sequence caution" evidence="2">
    <conflict type="erroneous initiation">
        <sequence resource="EMBL-CDS" id="BAC93510"/>
    </conflict>
</comment>
<keyword id="KW-0328">Glycosyltransferase</keyword>
<keyword id="KW-0479">Metal-binding</keyword>
<keyword id="KW-0671">Queuosine biosynthesis</keyword>
<keyword id="KW-0808">Transferase</keyword>
<keyword id="KW-0819">tRNA processing</keyword>
<keyword id="KW-0862">Zinc</keyword>
<gene>
    <name evidence="1" type="primary">tgt</name>
    <name type="ordered locus">VV0746</name>
</gene>
<proteinExistence type="inferred from homology"/>
<name>TGT_VIBVY</name>
<reference key="1">
    <citation type="journal article" date="2003" name="Genome Res.">
        <title>Comparative genome analysis of Vibrio vulnificus, a marine pathogen.</title>
        <authorList>
            <person name="Chen C.-Y."/>
            <person name="Wu K.-M."/>
            <person name="Chang Y.-C."/>
            <person name="Chang C.-H."/>
            <person name="Tsai H.-C."/>
            <person name="Liao T.-L."/>
            <person name="Liu Y.-M."/>
            <person name="Chen H.-J."/>
            <person name="Shen A.B.-T."/>
            <person name="Li J.-C."/>
            <person name="Su T.-L."/>
            <person name="Shao C.-P."/>
            <person name="Lee C.-T."/>
            <person name="Hor L.-I."/>
            <person name="Tsai S.-F."/>
        </authorList>
    </citation>
    <scope>NUCLEOTIDE SEQUENCE [LARGE SCALE GENOMIC DNA]</scope>
    <source>
        <strain>YJ016</strain>
    </source>
</reference>
<evidence type="ECO:0000255" key="1">
    <source>
        <dbReference type="HAMAP-Rule" id="MF_00168"/>
    </source>
</evidence>
<evidence type="ECO:0000305" key="2"/>
<protein>
    <recommendedName>
        <fullName evidence="1">Queuine tRNA-ribosyltransferase</fullName>
        <ecNumber evidence="1">2.4.2.29</ecNumber>
    </recommendedName>
    <alternativeName>
        <fullName evidence="1">Guanine insertion enzyme</fullName>
    </alternativeName>
    <alternativeName>
        <fullName evidence="1">tRNA-guanine transglycosylase</fullName>
    </alternativeName>
</protein>